<comment type="function">
    <text evidence="1">Ligates lysine onto the cytidine present at position 34 of the AUA codon-specific tRNA(Ile) that contains the anticodon CAU, in an ATP-dependent manner. Cytidine is converted to lysidine, thus changing the amino acid specificity of the tRNA from methionine to isoleucine.</text>
</comment>
<comment type="catalytic activity">
    <reaction evidence="1">
        <text>cytidine(34) in tRNA(Ile2) + L-lysine + ATP = lysidine(34) in tRNA(Ile2) + AMP + diphosphate + H(+)</text>
        <dbReference type="Rhea" id="RHEA:43744"/>
        <dbReference type="Rhea" id="RHEA-COMP:10625"/>
        <dbReference type="Rhea" id="RHEA-COMP:10670"/>
        <dbReference type="ChEBI" id="CHEBI:15378"/>
        <dbReference type="ChEBI" id="CHEBI:30616"/>
        <dbReference type="ChEBI" id="CHEBI:32551"/>
        <dbReference type="ChEBI" id="CHEBI:33019"/>
        <dbReference type="ChEBI" id="CHEBI:82748"/>
        <dbReference type="ChEBI" id="CHEBI:83665"/>
        <dbReference type="ChEBI" id="CHEBI:456215"/>
        <dbReference type="EC" id="6.3.4.19"/>
    </reaction>
</comment>
<comment type="subcellular location">
    <subcellularLocation>
        <location evidence="1">Cytoplasm</location>
    </subcellularLocation>
</comment>
<comment type="domain">
    <text>The N-terminal region contains the highly conserved SGGXDS motif, predicted to be a P-loop motif involved in ATP binding.</text>
</comment>
<comment type="similarity">
    <text evidence="1">Belongs to the tRNA(Ile)-lysidine synthase family.</text>
</comment>
<evidence type="ECO:0000255" key="1">
    <source>
        <dbReference type="HAMAP-Rule" id="MF_01161"/>
    </source>
</evidence>
<proteinExistence type="inferred from homology"/>
<organism>
    <name type="scientific">Caldanaerobacter subterraneus subsp. tengcongensis (strain DSM 15242 / JCM 11007 / NBRC 100824 / MB4)</name>
    <name type="common">Thermoanaerobacter tengcongensis</name>
    <dbReference type="NCBI Taxonomy" id="273068"/>
    <lineage>
        <taxon>Bacteria</taxon>
        <taxon>Bacillati</taxon>
        <taxon>Bacillota</taxon>
        <taxon>Clostridia</taxon>
        <taxon>Thermoanaerobacterales</taxon>
        <taxon>Thermoanaerobacteraceae</taxon>
        <taxon>Caldanaerobacter</taxon>
    </lineage>
</organism>
<reference key="1">
    <citation type="journal article" date="2002" name="Genome Res.">
        <title>A complete sequence of the T. tengcongensis genome.</title>
        <authorList>
            <person name="Bao Q."/>
            <person name="Tian Y."/>
            <person name="Li W."/>
            <person name="Xu Z."/>
            <person name="Xuan Z."/>
            <person name="Hu S."/>
            <person name="Dong W."/>
            <person name="Yang J."/>
            <person name="Chen Y."/>
            <person name="Xue Y."/>
            <person name="Xu Y."/>
            <person name="Lai X."/>
            <person name="Huang L."/>
            <person name="Dong X."/>
            <person name="Ma Y."/>
            <person name="Ling L."/>
            <person name="Tan H."/>
            <person name="Chen R."/>
            <person name="Wang J."/>
            <person name="Yu J."/>
            <person name="Yang H."/>
        </authorList>
    </citation>
    <scope>NUCLEOTIDE SEQUENCE [LARGE SCALE GENOMIC DNA]</scope>
    <source>
        <strain>DSM 15242 / JCM 11007 / NBRC 100824 / MB4</strain>
    </source>
</reference>
<sequence>MTMSFQRFGMIEKVLRTIEKYNMIEKDDKIVMGISGGPDSLCMLDVLFNLKGKFNLKLYVVHVNHMIRGEDAKKDAEFVEKLCKDLDLPFFLFEENIPYLAKKMGLSEEQAGRYVRYKAFEETLKRVGGNKIAVAHNKNDVAETVLLNILRGTGLRGLIGIKPVNGNIIRPLIEIERREIEKYLKDKNLHPRIDHTNYEDLYTRNKIRLKVIPYIEEVFKIDLVENLSRMAAILLEEDDYLEAKCEEVFNQICEINGEEIKVDVDALKSQHTAIKRRLVRRMYFYVKGETDGLEYGHVEDVLNLLDKPTSSKIDLPFEIEALKMYNNLVIRKKKTKEKVKFKEVLKIPGVTTIEGIGKFKAYVVDISQVDDFNKGEYIKFFDYDKIKGEIVVKSREDGDRFSPLGMRGTKKLKEFFIDEKIPREERDYIPLVAIGKEIVWVVGYRMSEKFKVDKNTSKVLVIEYTKE</sequence>
<name>TILS_CALS4</name>
<gene>
    <name evidence="1" type="primary">tilS</name>
    <name type="ordered locus">TTE2395</name>
</gene>
<dbReference type="EC" id="6.3.4.19" evidence="1"/>
<dbReference type="EMBL" id="AE008691">
    <property type="protein sequence ID" value="AAM25534.1"/>
    <property type="molecule type" value="Genomic_DNA"/>
</dbReference>
<dbReference type="SMR" id="Q8R7K9"/>
<dbReference type="STRING" id="273068.TTE2395"/>
<dbReference type="KEGG" id="tte:TTE2395"/>
<dbReference type="eggNOG" id="COG0037">
    <property type="taxonomic scope" value="Bacteria"/>
</dbReference>
<dbReference type="HOGENOM" id="CLU_018869_0_1_9"/>
<dbReference type="Proteomes" id="UP000000555">
    <property type="component" value="Chromosome"/>
</dbReference>
<dbReference type="GO" id="GO:0005737">
    <property type="term" value="C:cytoplasm"/>
    <property type="evidence" value="ECO:0007669"/>
    <property type="project" value="UniProtKB-SubCell"/>
</dbReference>
<dbReference type="GO" id="GO:0005524">
    <property type="term" value="F:ATP binding"/>
    <property type="evidence" value="ECO:0007669"/>
    <property type="project" value="UniProtKB-UniRule"/>
</dbReference>
<dbReference type="GO" id="GO:0032267">
    <property type="term" value="F:tRNA(Ile)-lysidine synthase activity"/>
    <property type="evidence" value="ECO:0007669"/>
    <property type="project" value="UniProtKB-EC"/>
</dbReference>
<dbReference type="GO" id="GO:0006400">
    <property type="term" value="P:tRNA modification"/>
    <property type="evidence" value="ECO:0007669"/>
    <property type="project" value="UniProtKB-UniRule"/>
</dbReference>
<dbReference type="CDD" id="cd01992">
    <property type="entry name" value="TilS_N"/>
    <property type="match status" value="1"/>
</dbReference>
<dbReference type="Gene3D" id="1.20.59.20">
    <property type="match status" value="1"/>
</dbReference>
<dbReference type="Gene3D" id="3.40.50.620">
    <property type="entry name" value="HUPs"/>
    <property type="match status" value="1"/>
</dbReference>
<dbReference type="Gene3D" id="3.50.40.10">
    <property type="entry name" value="Phenylalanyl-trna Synthetase, Chain B, domain 3"/>
    <property type="match status" value="1"/>
</dbReference>
<dbReference type="HAMAP" id="MF_01161">
    <property type="entry name" value="tRNA_Ile_lys_synt"/>
    <property type="match status" value="1"/>
</dbReference>
<dbReference type="InterPro" id="IPR012796">
    <property type="entry name" value="Lysidine-tRNA-synth_C"/>
</dbReference>
<dbReference type="InterPro" id="IPR020825">
    <property type="entry name" value="Phe-tRNA_synthase-like_B3/B4"/>
</dbReference>
<dbReference type="InterPro" id="IPR014729">
    <property type="entry name" value="Rossmann-like_a/b/a_fold"/>
</dbReference>
<dbReference type="InterPro" id="IPR011063">
    <property type="entry name" value="TilS/TtcA_N"/>
</dbReference>
<dbReference type="InterPro" id="IPR012094">
    <property type="entry name" value="tRNA_Ile_lys_synt"/>
</dbReference>
<dbReference type="InterPro" id="IPR012795">
    <property type="entry name" value="tRNA_Ile_lys_synt_N"/>
</dbReference>
<dbReference type="NCBIfam" id="TIGR02433">
    <property type="entry name" value="lysidine_TilS_C"/>
    <property type="match status" value="1"/>
</dbReference>
<dbReference type="NCBIfam" id="TIGR02432">
    <property type="entry name" value="lysidine_TilS_N"/>
    <property type="match status" value="1"/>
</dbReference>
<dbReference type="PANTHER" id="PTHR43033">
    <property type="entry name" value="TRNA(ILE)-LYSIDINE SYNTHASE-RELATED"/>
    <property type="match status" value="1"/>
</dbReference>
<dbReference type="PANTHER" id="PTHR43033:SF1">
    <property type="entry name" value="TRNA(ILE)-LYSIDINE SYNTHASE-RELATED"/>
    <property type="match status" value="1"/>
</dbReference>
<dbReference type="Pfam" id="PF01171">
    <property type="entry name" value="ATP_bind_3"/>
    <property type="match status" value="1"/>
</dbReference>
<dbReference type="Pfam" id="PF11734">
    <property type="entry name" value="TilS_C"/>
    <property type="match status" value="1"/>
</dbReference>
<dbReference type="SMART" id="SM00977">
    <property type="entry name" value="TilS_C"/>
    <property type="match status" value="1"/>
</dbReference>
<dbReference type="SUPFAM" id="SSF52402">
    <property type="entry name" value="Adenine nucleotide alpha hydrolases-like"/>
    <property type="match status" value="1"/>
</dbReference>
<dbReference type="SUPFAM" id="SSF82829">
    <property type="entry name" value="MesJ substrate recognition domain-like"/>
    <property type="match status" value="1"/>
</dbReference>
<dbReference type="SUPFAM" id="SSF56037">
    <property type="entry name" value="PheT/TilS domain"/>
    <property type="match status" value="1"/>
</dbReference>
<keyword id="KW-0067">ATP-binding</keyword>
<keyword id="KW-0963">Cytoplasm</keyword>
<keyword id="KW-0436">Ligase</keyword>
<keyword id="KW-0547">Nucleotide-binding</keyword>
<keyword id="KW-1185">Reference proteome</keyword>
<keyword id="KW-0819">tRNA processing</keyword>
<accession>Q8R7K9</accession>
<feature type="chain" id="PRO_0000181794" description="tRNA(Ile)-lysidine synthase">
    <location>
        <begin position="1"/>
        <end position="467"/>
    </location>
</feature>
<feature type="binding site" evidence="1">
    <location>
        <begin position="35"/>
        <end position="40"/>
    </location>
    <ligand>
        <name>ATP</name>
        <dbReference type="ChEBI" id="CHEBI:30616"/>
    </ligand>
</feature>
<protein>
    <recommendedName>
        <fullName evidence="1">tRNA(Ile)-lysidine synthase</fullName>
        <ecNumber evidence="1">6.3.4.19</ecNumber>
    </recommendedName>
    <alternativeName>
        <fullName evidence="1">tRNA(Ile)-2-lysyl-cytidine synthase</fullName>
    </alternativeName>
    <alternativeName>
        <fullName evidence="1">tRNA(Ile)-lysidine synthetase</fullName>
    </alternativeName>
</protein>